<reference evidence="4" key="1">
    <citation type="submission" date="2016-10" db="EMBL/GenBank/DDBJ databases">
        <authorList>
            <person name="de Groot N.N."/>
        </authorList>
    </citation>
    <scope>NUCLEOTIDE SEQUENCE [LARGE SCALE GENOMIC DNA]</scope>
    <source>
        <strain>OK412</strain>
    </source>
</reference>
<reference key="2">
    <citation type="journal article" date="2024" name="Nature">
        <title>Bacteria conjugate ubiquitin-like proteins to interfere with phage assembly.</title>
        <authorList>
            <person name="Hoer J."/>
            <person name="Wolf S.G."/>
            <person name="Sorek R."/>
        </authorList>
    </citation>
    <scope>FUNCTION</scope>
    <scope>PROBABLE ACTIVE SITE</scope>
    <scope>MUTAGENESIS OF CYS-385</scope>
</reference>
<name>BILD_COLS4</name>
<protein>
    <recommendedName>
        <fullName evidence="2">Bacterial E1-like protein BilD</fullName>
        <ecNumber evidence="3">6.2.1.-</ecNumber>
    </recommendedName>
    <alternativeName>
        <fullName>E1 ubiquitin-conjugating enzyme BilD</fullName>
    </alternativeName>
</protein>
<feature type="chain" id="PRO_0000462060" description="Bacterial E1-like protein BilD">
    <location>
        <begin position="1"/>
        <end position="461"/>
    </location>
</feature>
<feature type="active site" description="Glycyl thioester intermediate" evidence="3">
    <location>
        <position position="385"/>
    </location>
</feature>
<feature type="mutagenesis site" description="No longer resistant to SECphi27, does not form a covalent linkage with BilA." evidence="1">
    <original>C</original>
    <variation>A</variation>
    <location>
        <position position="385"/>
    </location>
</feature>
<accession>A0A1I1P074</accession>
<sequence>MNLTLDHTTLHRAAKYFMDSGKAASHEAAMNLLQQFGLTIYVGEEIRSSAAHQIALLTIVNVTRRTLLGGVEVIGLPDCDSLTALAPNTGLKEAVMALGGTPVAVARPEWPTALIGSVEDYSNKDTAWRVTWEGWRAGAAPLMIGDRLSEDNSMALAPALAAAVCAGEVFSHYAGDHPMAGRRTAGLSLWQPGADWLDVDESEPELAFLPSNLWIIGLGNLGQAFAWLLALMPYETPQELQLVLQDYDRIAPSNDSTSLLSYKHDTNKMKARVVADWLDKRGFTTFIEERRFGPWTKRHADEPGVALCGVDNALARSALDQAGFPLIVEAGLGGGPQAFRSLGIHTFPSSRTAAEIWAKQVALADTSTEDMPAYQALKKSGIDACGLTQLASRTVGVPFVGLIAACLAMSELLRRLHGGKAFEFIAGSTATLQDIEFGTLHAPPYAHGYTRAMPMGWPTAP</sequence>
<gene>
    <name evidence="2" type="primary">bilD</name>
    <name evidence="4" type="ORF">SAMN04515619_11955</name>
</gene>
<organism>
    <name type="scientific">Collimonas sp. (strain OK412)</name>
    <dbReference type="NCBI Taxonomy" id="1801619"/>
    <lineage>
        <taxon>Bacteria</taxon>
        <taxon>Pseudomonadati</taxon>
        <taxon>Pseudomonadota</taxon>
        <taxon>Betaproteobacteria</taxon>
        <taxon>Burkholderiales</taxon>
        <taxon>Oxalobacteraceae</taxon>
        <taxon>Collimonas</taxon>
    </lineage>
</organism>
<keyword id="KW-0051">Antiviral defense</keyword>
<keyword id="KW-0436">Ligase</keyword>
<keyword id="KW-0882">Thioester bond</keyword>
<keyword id="KW-0833">Ubl conjugation pathway</keyword>
<proteinExistence type="evidence at protein level"/>
<evidence type="ECO:0000269" key="1">
    <source>
    </source>
</evidence>
<evidence type="ECO:0000303" key="2">
    <source>
    </source>
</evidence>
<evidence type="ECO:0000305" key="3">
    <source>
    </source>
</evidence>
<evidence type="ECO:0000312" key="4">
    <source>
        <dbReference type="EMBL" id="SFD01128.1"/>
    </source>
</evidence>
<dbReference type="EC" id="6.2.1.-" evidence="3"/>
<dbReference type="EMBL" id="FOLC01000019">
    <property type="protein sequence ID" value="SFD01128.1"/>
    <property type="molecule type" value="Genomic_DNA"/>
</dbReference>
<dbReference type="RefSeq" id="WP_092399443.1">
    <property type="nucleotide sequence ID" value="NZ_FOLC01000019.1"/>
</dbReference>
<dbReference type="SMR" id="A0A1I1P074"/>
<dbReference type="STRING" id="1801619.SAMN04515619_11955"/>
<dbReference type="OrthoDB" id="9087947at2"/>
<dbReference type="Proteomes" id="UP000199381">
    <property type="component" value="Unassembled WGS sequence"/>
</dbReference>
<dbReference type="GO" id="GO:0008641">
    <property type="term" value="F:ubiquitin-like modifier activating enzyme activity"/>
    <property type="evidence" value="ECO:0000314"/>
    <property type="project" value="UniProtKB"/>
</dbReference>
<dbReference type="GO" id="GO:0051607">
    <property type="term" value="P:defense response to virus"/>
    <property type="evidence" value="ECO:0000314"/>
    <property type="project" value="UniProtKB"/>
</dbReference>
<dbReference type="GO" id="GO:0032446">
    <property type="term" value="P:protein modification by small protein conjugation"/>
    <property type="evidence" value="ECO:0000314"/>
    <property type="project" value="UniProtKB"/>
</dbReference>
<dbReference type="Gene3D" id="3.40.50.720">
    <property type="entry name" value="NAD(P)-binding Rossmann-like Domain"/>
    <property type="match status" value="1"/>
</dbReference>
<dbReference type="InterPro" id="IPR035985">
    <property type="entry name" value="Ubiquitin-activating_enz"/>
</dbReference>
<dbReference type="SUPFAM" id="SSF69572">
    <property type="entry name" value="Activating enzymes of the ubiquitin-like proteins"/>
    <property type="match status" value="1"/>
</dbReference>
<comment type="function">
    <text evidence="1 3">Component of the Bil (bacterial ISG15-like) antiviral defense system, composed of BilA, BilB, BilC and BilD. The Bil system specifically conjugates a ubiquitin-like moiety (bilA) to the bacteriophage central tail fiber (CTF, or tip attachment protein J) via reactions involving E1 (bilD) and E2 (bilB). Modifies CTF of phage SECphi27 and SECphi4, which probably interferes with assembly of the phage tail. Also modifies T5 baseplate hub protein pb3 (gene D16), but not gp27 of phage T6 (Bil defends against T6). BilD (E1) catalyzes the first step in conjugation (PubMed:39020165). Activates ubiquitin-like BilA by first adenylating its C-terminal glycine residue with ATP, and then conjugates it to the side chain of a cysteine residue in E1 (this protein), yielding a ubiquitin-E1 thioester and free AMP (Probable) (PubMed:39020165). Bil-encoding bacteria produce mostly defective phage SECphi27, many of which have phage assembly defects, including no tails. SECphi27 phage progeny produced in E.coli with the Bil system inject less DNA into naive host cells, maybe because the phage are less able to adsorb and inject their DNA into host cells.</text>
</comment>
<comment type="function">
    <text evidence="1">Expression of the Bil system in E.coli (strain MG1655) confers about 100-fold resistance to phage SECphi27, SECphi18, SECphi6, SECphi4 and T5, but not to SECphi17. When cells expressing the Bil system are infected by phage SECphi27 at low multiplicity of infection (0.03 MOI) the culture survives, at 3.0 MOI the culture collapses at the same time as cells without the Bil system.</text>
</comment>